<keyword id="KW-0227">DNA damage</keyword>
<keyword id="KW-0234">DNA repair</keyword>
<keyword id="KW-0479">Metal-binding</keyword>
<keyword id="KW-0539">Nucleus</keyword>
<keyword id="KW-1185">Reference proteome</keyword>
<keyword id="KW-0804">Transcription</keyword>
<keyword id="KW-0805">Transcription regulation</keyword>
<keyword id="KW-0862">Zinc</keyword>
<keyword id="KW-0863">Zinc-finger</keyword>
<reference key="1">
    <citation type="journal article" date="2000" name="Nature">
        <title>Sequence and analysis of chromosome 1 of the plant Arabidopsis thaliana.</title>
        <authorList>
            <person name="Theologis A."/>
            <person name="Ecker J.R."/>
            <person name="Palm C.J."/>
            <person name="Federspiel N.A."/>
            <person name="Kaul S."/>
            <person name="White O."/>
            <person name="Alonso J."/>
            <person name="Altafi H."/>
            <person name="Araujo R."/>
            <person name="Bowman C.L."/>
            <person name="Brooks S.Y."/>
            <person name="Buehler E."/>
            <person name="Chan A."/>
            <person name="Chao Q."/>
            <person name="Chen H."/>
            <person name="Cheuk R.F."/>
            <person name="Chin C.W."/>
            <person name="Chung M.K."/>
            <person name="Conn L."/>
            <person name="Conway A.B."/>
            <person name="Conway A.R."/>
            <person name="Creasy T.H."/>
            <person name="Dewar K."/>
            <person name="Dunn P."/>
            <person name="Etgu P."/>
            <person name="Feldblyum T.V."/>
            <person name="Feng J.-D."/>
            <person name="Fong B."/>
            <person name="Fujii C.Y."/>
            <person name="Gill J.E."/>
            <person name="Goldsmith A.D."/>
            <person name="Haas B."/>
            <person name="Hansen N.F."/>
            <person name="Hughes B."/>
            <person name="Huizar L."/>
            <person name="Hunter J.L."/>
            <person name="Jenkins J."/>
            <person name="Johnson-Hopson C."/>
            <person name="Khan S."/>
            <person name="Khaykin E."/>
            <person name="Kim C.J."/>
            <person name="Koo H.L."/>
            <person name="Kremenetskaia I."/>
            <person name="Kurtz D.B."/>
            <person name="Kwan A."/>
            <person name="Lam B."/>
            <person name="Langin-Hooper S."/>
            <person name="Lee A."/>
            <person name="Lee J.M."/>
            <person name="Lenz C.A."/>
            <person name="Li J.H."/>
            <person name="Li Y.-P."/>
            <person name="Lin X."/>
            <person name="Liu S.X."/>
            <person name="Liu Z.A."/>
            <person name="Luros J.S."/>
            <person name="Maiti R."/>
            <person name="Marziali A."/>
            <person name="Militscher J."/>
            <person name="Miranda M."/>
            <person name="Nguyen M."/>
            <person name="Nierman W.C."/>
            <person name="Osborne B.I."/>
            <person name="Pai G."/>
            <person name="Peterson J."/>
            <person name="Pham P.K."/>
            <person name="Rizzo M."/>
            <person name="Rooney T."/>
            <person name="Rowley D."/>
            <person name="Sakano H."/>
            <person name="Salzberg S.L."/>
            <person name="Schwartz J.R."/>
            <person name="Shinn P."/>
            <person name="Southwick A.M."/>
            <person name="Sun H."/>
            <person name="Tallon L.J."/>
            <person name="Tambunga G."/>
            <person name="Toriumi M.J."/>
            <person name="Town C.D."/>
            <person name="Utterback T."/>
            <person name="Van Aken S."/>
            <person name="Vaysberg M."/>
            <person name="Vysotskaia V.S."/>
            <person name="Walker M."/>
            <person name="Wu D."/>
            <person name="Yu G."/>
            <person name="Fraser C.M."/>
            <person name="Venter J.C."/>
            <person name="Davis R.W."/>
        </authorList>
    </citation>
    <scope>NUCLEOTIDE SEQUENCE [LARGE SCALE GENOMIC DNA]</scope>
    <source>
        <strain>cv. Columbia</strain>
    </source>
</reference>
<reference key="2">
    <citation type="journal article" date="2017" name="Plant J.">
        <title>Araport11: a complete reannotation of the Arabidopsis thaliana reference genome.</title>
        <authorList>
            <person name="Cheng C.Y."/>
            <person name="Krishnakumar V."/>
            <person name="Chan A.P."/>
            <person name="Thibaud-Nissen F."/>
            <person name="Schobel S."/>
            <person name="Town C.D."/>
        </authorList>
    </citation>
    <scope>GENOME REANNOTATION</scope>
    <source>
        <strain>cv. Columbia</strain>
    </source>
</reference>
<reference key="3">
    <citation type="submission" date="2006-04" db="EMBL/GenBank/DDBJ databases">
        <title>Arabidopsis ORF clones.</title>
        <authorList>
            <person name="Shinn P."/>
            <person name="Chen H."/>
            <person name="Kim C.J."/>
            <person name="Ecker J.R."/>
        </authorList>
    </citation>
    <scope>NUCLEOTIDE SEQUENCE [LARGE SCALE MRNA]</scope>
    <source>
        <strain>cv. Columbia</strain>
    </source>
</reference>
<reference key="4">
    <citation type="submission" date="2002-03" db="EMBL/GenBank/DDBJ databases">
        <title>Full-length cDNA from Arabidopsis thaliana.</title>
        <authorList>
            <person name="Brover V.V."/>
            <person name="Troukhan M.E."/>
            <person name="Alexandrov N.A."/>
            <person name="Lu Y.-P."/>
            <person name="Flavell R.B."/>
            <person name="Feldmann K.A."/>
        </authorList>
    </citation>
    <scope>NUCLEOTIDE SEQUENCE [LARGE SCALE MRNA]</scope>
    <source>
        <strain>cv. Columbia</strain>
    </source>
</reference>
<reference key="5">
    <citation type="journal article" date="2005" name="Environ. Mol. Mutagen.">
        <title>Components of nucleotide excision repair and DNA damage tolerance in Arabidopsis thaliana.</title>
        <authorList>
            <person name="Kunz B.A."/>
            <person name="Anderson H.J."/>
            <person name="Osmond M.J."/>
            <person name="Vonarx E.J."/>
        </authorList>
    </citation>
    <scope>COMPONENT OF TFIIH CORE COMPLEX</scope>
    <scope>NOMENCLATURE</scope>
</reference>
<comment type="function">
    <text evidence="1">Component of the general transcription and DNA repair factor IIH (TFIIH) core complex, which is involved in general and transcription-coupled nucleotide excision repair (NER) of damaged DNA and, when complexed to CAK, in RNA transcription by RNA polymerase II. In NER, TFIIH acts by opening DNA around the lesion to allow the excision of the damaged oligonucleotide and its replacement by a new DNA fragment. In transcription, TFIIH has an essential role in transcription initiation. When the pre-initiation complex (PIC) has been established, TFIIH is required for promoter opening and promoter escape. Phosphorylation of the C-terminal tail (CTD) of the largest subunit of RNA polymerase II by the kinase module CAK controls the initiation of transcription.</text>
</comment>
<comment type="subunit">
    <text evidence="1 4">Component of the 7-subunit TFIIH core complex composed of XPB, XPD, TFB1/GTF2H1, GTF2H2/P44, TFB4/GTF2H3, TFB2/GTF2H4 and TFB5/GTF2H5, which is active in NER. The core complex associates with the 3-subunit CDK-activating kinase (CAK) module composed of CYCH1/cyclin H1, CDKD and MAT1/At4g30820 to form the 10-subunit holoenzyme (holo-TFIIH) active in transcription.</text>
</comment>
<comment type="subcellular location">
    <subcellularLocation>
        <location evidence="3">Nucleus</location>
    </subcellularLocation>
</comment>
<comment type="similarity">
    <text evidence="3">Belongs to the TFB4 family.</text>
</comment>
<comment type="sequence caution" evidence="3">
    <conflict type="erroneous gene model prediction">
        <sequence resource="EMBL-CDS" id="AAF25986"/>
    </conflict>
</comment>
<protein>
    <recommendedName>
        <fullName evidence="3">General transcription and DNA repair factor IIH subunit TFB4</fullName>
        <shortName evidence="2">AtTFB4</shortName>
        <shortName evidence="3">TFIIH subunit TFB4</shortName>
    </recommendedName>
    <alternativeName>
        <fullName evidence="3">RNA polymerase II transcription factor B subunit 4</fullName>
    </alternativeName>
</protein>
<feature type="chain" id="PRO_0000435436" description="General transcription and DNA repair factor IIH subunit TFB4">
    <location>
        <begin position="1"/>
        <end position="301"/>
    </location>
</feature>
<feature type="zinc finger region" description="C4-type" evidence="3">
    <location>
        <begin position="259"/>
        <end position="276"/>
    </location>
</feature>
<accession>Q8LF41</accession>
<accession>Q9LPQ2</accession>
<sequence length="301" mass="33068">MPAIASKQYSDDVSLLVLLLDTNPLFWSTTSITFSQFLSHVLAFLNAVLGLNQLNQVVVIATGYSSCDYIYDSSLTSNHGNFESNGTGMPAIFGSLLKKLEEFVTKDEELSKEEVSEDRIPSCLLSGSLSMALCYIQRVFRSGHLHPQPRILCLQGSPDGPEQYVAVMNSIFSAQRLMVPIDSCYIGVQNSAFLQQASYITGGVHHTPKQLDGLFQYLTTIFATDLHSRGFVQLPKPIGVDFRASCFCHKKTIDMGYICSVCLSIFCEHHKKCSTCGSVFGQSKLDDASSASDKKRKAPST</sequence>
<evidence type="ECO:0000250" key="1">
    <source>
        <dbReference type="UniProtKB" id="Q13889"/>
    </source>
</evidence>
<evidence type="ECO:0000303" key="2">
    <source>
    </source>
</evidence>
<evidence type="ECO:0000305" key="3"/>
<evidence type="ECO:0000305" key="4">
    <source>
    </source>
</evidence>
<evidence type="ECO:0000312" key="5">
    <source>
        <dbReference type="Araport" id="AT1G18340"/>
    </source>
</evidence>
<evidence type="ECO:0000312" key="6">
    <source>
        <dbReference type="EMBL" id="AAF25986.1"/>
    </source>
</evidence>
<dbReference type="EMBL" id="AC013354">
    <property type="protein sequence ID" value="AAF25986.1"/>
    <property type="status" value="ALT_SEQ"/>
    <property type="molecule type" value="Genomic_DNA"/>
</dbReference>
<dbReference type="EMBL" id="CP002684">
    <property type="protein sequence ID" value="AEE29705.1"/>
    <property type="molecule type" value="Genomic_DNA"/>
</dbReference>
<dbReference type="EMBL" id="BT025174">
    <property type="protein sequence ID" value="ABE77412.1"/>
    <property type="molecule type" value="mRNA"/>
</dbReference>
<dbReference type="EMBL" id="AY085062">
    <property type="protein sequence ID" value="AAM61618.1"/>
    <property type="molecule type" value="mRNA"/>
</dbReference>
<dbReference type="PIR" id="G86317">
    <property type="entry name" value="G86317"/>
</dbReference>
<dbReference type="RefSeq" id="NP_564050.1">
    <property type="nucleotide sequence ID" value="NM_101692.2"/>
</dbReference>
<dbReference type="SMR" id="Q8LF41"/>
<dbReference type="FunCoup" id="Q8LF41">
    <property type="interactions" value="4307"/>
</dbReference>
<dbReference type="IntAct" id="Q8LF41">
    <property type="interactions" value="1"/>
</dbReference>
<dbReference type="STRING" id="3702.Q8LF41"/>
<dbReference type="iPTMnet" id="Q8LF41"/>
<dbReference type="PaxDb" id="3702-AT1G18340.1"/>
<dbReference type="ProteomicsDB" id="246473"/>
<dbReference type="EnsemblPlants" id="AT1G18340.1">
    <property type="protein sequence ID" value="AT1G18340.1"/>
    <property type="gene ID" value="AT1G18340"/>
</dbReference>
<dbReference type="GeneID" id="838415"/>
<dbReference type="Gramene" id="AT1G18340.1">
    <property type="protein sequence ID" value="AT1G18340.1"/>
    <property type="gene ID" value="AT1G18340"/>
</dbReference>
<dbReference type="KEGG" id="ath:AT1G18340"/>
<dbReference type="Araport" id="AT1G18340"/>
<dbReference type="TAIR" id="AT1G18340"/>
<dbReference type="eggNOG" id="KOG2487">
    <property type="taxonomic scope" value="Eukaryota"/>
</dbReference>
<dbReference type="HOGENOM" id="CLU_040211_1_0_1"/>
<dbReference type="InParanoid" id="Q8LF41"/>
<dbReference type="OMA" id="QGCDITS"/>
<dbReference type="OrthoDB" id="17307at2759"/>
<dbReference type="PhylomeDB" id="Q8LF41"/>
<dbReference type="PRO" id="PR:Q8LF41"/>
<dbReference type="Proteomes" id="UP000006548">
    <property type="component" value="Chromosome 1"/>
</dbReference>
<dbReference type="ExpressionAtlas" id="Q8LF41">
    <property type="expression patterns" value="baseline and differential"/>
</dbReference>
<dbReference type="GO" id="GO:0000439">
    <property type="term" value="C:transcription factor TFIIH core complex"/>
    <property type="evidence" value="ECO:0007669"/>
    <property type="project" value="InterPro"/>
</dbReference>
<dbReference type="GO" id="GO:0008270">
    <property type="term" value="F:zinc ion binding"/>
    <property type="evidence" value="ECO:0007669"/>
    <property type="project" value="UniProtKB-KW"/>
</dbReference>
<dbReference type="GO" id="GO:0006289">
    <property type="term" value="P:nucleotide-excision repair"/>
    <property type="evidence" value="ECO:0007669"/>
    <property type="project" value="InterPro"/>
</dbReference>
<dbReference type="GO" id="GO:0006355">
    <property type="term" value="P:regulation of DNA-templated transcription"/>
    <property type="evidence" value="ECO:0007669"/>
    <property type="project" value="InterPro"/>
</dbReference>
<dbReference type="FunFam" id="3.40.50.410:FF:000064">
    <property type="entry name" value="RNA polymerase II transcription factor B subunit 4"/>
    <property type="match status" value="1"/>
</dbReference>
<dbReference type="Gene3D" id="3.40.50.410">
    <property type="entry name" value="von Willebrand factor, type A domain"/>
    <property type="match status" value="1"/>
</dbReference>
<dbReference type="InterPro" id="IPR004600">
    <property type="entry name" value="TFIIH_Tfb4/GTF2H3"/>
</dbReference>
<dbReference type="InterPro" id="IPR036465">
    <property type="entry name" value="vWFA_dom_sf"/>
</dbReference>
<dbReference type="PANTHER" id="PTHR12831:SF0">
    <property type="entry name" value="GENERAL TRANSCRIPTION FACTOR IIH SUBUNIT 3"/>
    <property type="match status" value="1"/>
</dbReference>
<dbReference type="PANTHER" id="PTHR12831">
    <property type="entry name" value="TRANSCRIPTION INITIATION FACTOR IIH TFIIH , POLYPEPTIDE 3-RELATED"/>
    <property type="match status" value="1"/>
</dbReference>
<dbReference type="Pfam" id="PF03850">
    <property type="entry name" value="Tfb4"/>
    <property type="match status" value="1"/>
</dbReference>
<organism>
    <name type="scientific">Arabidopsis thaliana</name>
    <name type="common">Mouse-ear cress</name>
    <dbReference type="NCBI Taxonomy" id="3702"/>
    <lineage>
        <taxon>Eukaryota</taxon>
        <taxon>Viridiplantae</taxon>
        <taxon>Streptophyta</taxon>
        <taxon>Embryophyta</taxon>
        <taxon>Tracheophyta</taxon>
        <taxon>Spermatophyta</taxon>
        <taxon>Magnoliopsida</taxon>
        <taxon>eudicotyledons</taxon>
        <taxon>Gunneridae</taxon>
        <taxon>Pentapetalae</taxon>
        <taxon>rosids</taxon>
        <taxon>malvids</taxon>
        <taxon>Brassicales</taxon>
        <taxon>Brassicaceae</taxon>
        <taxon>Camelineae</taxon>
        <taxon>Arabidopsis</taxon>
    </lineage>
</organism>
<proteinExistence type="evidence at transcript level"/>
<gene>
    <name evidence="3" type="primary">TFB4</name>
    <name evidence="3" type="synonym">GTF2H3</name>
    <name evidence="5" type="ordered locus">At1g18340</name>
    <name evidence="6" type="ORF">F15H18.15</name>
</gene>
<name>TFB4_ARATH</name>